<organism>
    <name type="scientific">Staphylococcus aureus (strain bovine RF122 / ET3-1)</name>
    <dbReference type="NCBI Taxonomy" id="273036"/>
    <lineage>
        <taxon>Bacteria</taxon>
        <taxon>Bacillati</taxon>
        <taxon>Bacillota</taxon>
        <taxon>Bacilli</taxon>
        <taxon>Bacillales</taxon>
        <taxon>Staphylococcaceae</taxon>
        <taxon>Staphylococcus</taxon>
    </lineage>
</organism>
<proteinExistence type="inferred from homology"/>
<keyword id="KW-0046">Antibiotic resistance</keyword>
<keyword id="KW-1003">Cell membrane</keyword>
<keyword id="KW-0472">Membrane</keyword>
<keyword id="KW-0812">Transmembrane</keyword>
<keyword id="KW-1133">Transmembrane helix</keyword>
<keyword id="KW-0813">Transport</keyword>
<accession>Q2YVH4</accession>
<feature type="chain" id="PRO_0000290227" description="Multidrug export protein MepA">
    <location>
        <begin position="1"/>
        <end position="451"/>
    </location>
</feature>
<feature type="transmembrane region" description="Helical" evidence="2">
    <location>
        <begin position="26"/>
        <end position="46"/>
    </location>
</feature>
<feature type="transmembrane region" description="Helical" evidence="2">
    <location>
        <begin position="52"/>
        <end position="72"/>
    </location>
</feature>
<feature type="transmembrane region" description="Helical" evidence="2">
    <location>
        <begin position="97"/>
        <end position="117"/>
    </location>
</feature>
<feature type="transmembrane region" description="Helical" evidence="2">
    <location>
        <begin position="139"/>
        <end position="159"/>
    </location>
</feature>
<feature type="transmembrane region" description="Helical" evidence="2">
    <location>
        <begin position="170"/>
        <end position="190"/>
    </location>
</feature>
<feature type="transmembrane region" description="Helical" evidence="2">
    <location>
        <begin position="194"/>
        <end position="214"/>
    </location>
</feature>
<feature type="transmembrane region" description="Helical" evidence="2">
    <location>
        <begin position="245"/>
        <end position="265"/>
    </location>
</feature>
<feature type="transmembrane region" description="Helical" evidence="2">
    <location>
        <begin position="282"/>
        <end position="302"/>
    </location>
</feature>
<feature type="transmembrane region" description="Helical" evidence="2">
    <location>
        <begin position="318"/>
        <end position="338"/>
    </location>
</feature>
<feature type="transmembrane region" description="Helical" evidence="2">
    <location>
        <begin position="355"/>
        <end position="375"/>
    </location>
</feature>
<feature type="transmembrane region" description="Helical" evidence="2">
    <location>
        <begin position="390"/>
        <end position="410"/>
    </location>
</feature>
<feature type="transmembrane region" description="Helical" evidence="2">
    <location>
        <begin position="417"/>
        <end position="437"/>
    </location>
</feature>
<gene>
    <name type="primary">mepA</name>
    <name type="ordered locus">SAB0284</name>
</gene>
<name>MEPA_STAAB</name>
<comment type="function">
    <text evidence="1">Multidrug resistance efflux protein.</text>
</comment>
<comment type="subcellular location">
    <subcellularLocation>
        <location evidence="3">Cell membrane</location>
        <topology evidence="3">Multi-pass membrane protein</topology>
    </subcellularLocation>
</comment>
<comment type="similarity">
    <text evidence="3">Belongs to the multi antimicrobial extrusion (MATE) (TC 2.A.66.1) family. MepA subfamily.</text>
</comment>
<protein>
    <recommendedName>
        <fullName>Multidrug export protein MepA</fullName>
    </recommendedName>
</protein>
<dbReference type="EMBL" id="AJ938182">
    <property type="protein sequence ID" value="CAI79972.1"/>
    <property type="molecule type" value="Genomic_DNA"/>
</dbReference>
<dbReference type="RefSeq" id="WP_000651036.1">
    <property type="nucleotide sequence ID" value="NC_007622.1"/>
</dbReference>
<dbReference type="SMR" id="Q2YVH4"/>
<dbReference type="KEGG" id="sab:SAB0284"/>
<dbReference type="HOGENOM" id="CLU_012893_0_1_9"/>
<dbReference type="GO" id="GO:0005886">
    <property type="term" value="C:plasma membrane"/>
    <property type="evidence" value="ECO:0007669"/>
    <property type="project" value="UniProtKB-SubCell"/>
</dbReference>
<dbReference type="GO" id="GO:0015297">
    <property type="term" value="F:antiporter activity"/>
    <property type="evidence" value="ECO:0007669"/>
    <property type="project" value="InterPro"/>
</dbReference>
<dbReference type="GO" id="GO:0042910">
    <property type="term" value="F:xenobiotic transmembrane transporter activity"/>
    <property type="evidence" value="ECO:0007669"/>
    <property type="project" value="InterPro"/>
</dbReference>
<dbReference type="GO" id="GO:0046677">
    <property type="term" value="P:response to antibiotic"/>
    <property type="evidence" value="ECO:0007669"/>
    <property type="project" value="UniProtKB-KW"/>
</dbReference>
<dbReference type="CDD" id="cd13143">
    <property type="entry name" value="MATE_MepA_like"/>
    <property type="match status" value="1"/>
</dbReference>
<dbReference type="InterPro" id="IPR002528">
    <property type="entry name" value="MATE_fam"/>
</dbReference>
<dbReference type="InterPro" id="IPR045070">
    <property type="entry name" value="MATE_MepA-like"/>
</dbReference>
<dbReference type="InterPro" id="IPR051327">
    <property type="entry name" value="MATE_MepA_subfamily"/>
</dbReference>
<dbReference type="InterPro" id="IPR048279">
    <property type="entry name" value="MdtK-like"/>
</dbReference>
<dbReference type="NCBIfam" id="TIGR00797">
    <property type="entry name" value="matE"/>
    <property type="match status" value="1"/>
</dbReference>
<dbReference type="NCBIfam" id="NF000131">
    <property type="entry name" value="MATE_multi_MepA"/>
    <property type="match status" value="1"/>
</dbReference>
<dbReference type="PANTHER" id="PTHR43823:SF3">
    <property type="entry name" value="MULTIDRUG EXPORT PROTEIN MEPA"/>
    <property type="match status" value="1"/>
</dbReference>
<dbReference type="PANTHER" id="PTHR43823">
    <property type="entry name" value="SPORULATION PROTEIN YKVU"/>
    <property type="match status" value="1"/>
</dbReference>
<dbReference type="Pfam" id="PF01554">
    <property type="entry name" value="MatE"/>
    <property type="match status" value="2"/>
</dbReference>
<dbReference type="PIRSF" id="PIRSF006603">
    <property type="entry name" value="DinF"/>
    <property type="match status" value="1"/>
</dbReference>
<reference key="1">
    <citation type="journal article" date="2007" name="PLoS ONE">
        <title>Molecular correlates of host specialization in Staphylococcus aureus.</title>
        <authorList>
            <person name="Herron-Olson L."/>
            <person name="Fitzgerald J.R."/>
            <person name="Musser J.M."/>
            <person name="Kapur V."/>
        </authorList>
    </citation>
    <scope>NUCLEOTIDE SEQUENCE [LARGE SCALE GENOMIC DNA]</scope>
    <source>
        <strain>bovine RF122 / ET3-1</strain>
    </source>
</reference>
<evidence type="ECO:0000250" key="1"/>
<evidence type="ECO:0000255" key="2"/>
<evidence type="ECO:0000305" key="3"/>
<sequence length="451" mass="48952">MKDEQLYYFEKSPVFKAMMHFSLPMMIGTLLSVIYGILNIYFIGFLEDSHMISAISLTLPVFAILMGLGNLFDVGAGTYISRLLGAKDYSKSKFVSSFSIYGGIALGLIVILVALPFSDQIAAILGARGETLALTSNYLKVMFLSAPFVILFFILEQFARAIGAPMISMIGMLASVSLNIILDPILIFGFDLNVVGAALGTAISNVAAALFFIIYFMKNSDVVSVNIKLAKPNKEMLSEIFKIGIPAFLMSILMGFTGLVLNLFLAHYGNFAIASYGISFRLVQFPELIIMGLCEGVVPLIAYNFMSNKGRMKDVIKAVIMSIGVIFVVCMIAVFTIGHHMVGLFTTDQAIVEMATFILKVTMTSLLLNGIGFLFTGMLQATGQGRGATIMAILQGVVIIPVLFIMNALFGLTGVMWSLLIAESLCALAAMLIVYLLRDRLTVDTSELIEG</sequence>